<name>RUVA_STRMU</name>
<gene>
    <name evidence="1" type="primary">ruvA</name>
    <name type="ordered locus">SMU_2088</name>
</gene>
<accession>Q8CWW3</accession>
<protein>
    <recommendedName>
        <fullName evidence="1">Holliday junction branch migration complex subunit RuvA</fullName>
    </recommendedName>
</protein>
<reference key="1">
    <citation type="journal article" date="2002" name="Proc. Natl. Acad. Sci. U.S.A.">
        <title>Genome sequence of Streptococcus mutans UA159, a cariogenic dental pathogen.</title>
        <authorList>
            <person name="Ajdic D.J."/>
            <person name="McShan W.M."/>
            <person name="McLaughlin R.E."/>
            <person name="Savic G."/>
            <person name="Chang J."/>
            <person name="Carson M.B."/>
            <person name="Primeaux C."/>
            <person name="Tian R."/>
            <person name="Kenton S."/>
            <person name="Jia H.G."/>
            <person name="Lin S.P."/>
            <person name="Qian Y."/>
            <person name="Li S."/>
            <person name="Zhu H."/>
            <person name="Najar F.Z."/>
            <person name="Lai H."/>
            <person name="White J."/>
            <person name="Roe B.A."/>
            <person name="Ferretti J.J."/>
        </authorList>
    </citation>
    <scope>NUCLEOTIDE SEQUENCE [LARGE SCALE GENOMIC DNA]</scope>
    <source>
        <strain>ATCC 700610 / UA159</strain>
    </source>
</reference>
<sequence>MYDYIKGNLTKITAKYIVLETGGLGYVINVANPYSFSNQINQAIQIYIHHVVREDAHLLYGFHTEDEKAVFLNLISVSGIGPTSALAIIAADDNEGLVKAIDHSDVNYLMKFPKIGKKTAQQMVLDLAGKFVDINEVSTDKSKVSTINNNQELEEAVEALLALGYKTNELKKIEKFFEGTTDTAENYIKSALKMLMK</sequence>
<comment type="function">
    <text evidence="1">The RuvA-RuvB-RuvC complex processes Holliday junction (HJ) DNA during genetic recombination and DNA repair, while the RuvA-RuvB complex plays an important role in the rescue of blocked DNA replication forks via replication fork reversal (RFR). RuvA specifically binds to HJ cruciform DNA, conferring on it an open structure. The RuvB hexamer acts as an ATP-dependent pump, pulling dsDNA into and through the RuvAB complex. HJ branch migration allows RuvC to scan DNA until it finds its consensus sequence, where it cleaves and resolves the cruciform DNA.</text>
</comment>
<comment type="subunit">
    <text evidence="1">Homotetramer. Forms an RuvA(8)-RuvB(12)-Holliday junction (HJ) complex. HJ DNA is sandwiched between 2 RuvA tetramers; dsDNA enters through RuvA and exits via RuvB. An RuvB hexamer assembles on each DNA strand where it exits the tetramer. Each RuvB hexamer is contacted by two RuvA subunits (via domain III) on 2 adjacent RuvB subunits; this complex drives branch migration. In the full resolvosome a probable DNA-RuvA(4)-RuvB(12)-RuvC(2) complex forms which resolves the HJ.</text>
</comment>
<comment type="subcellular location">
    <subcellularLocation>
        <location evidence="1">Cytoplasm</location>
    </subcellularLocation>
</comment>
<comment type="domain">
    <text evidence="1">Has three domains with a flexible linker between the domains II and III and assumes an 'L' shape. Domain III is highly mobile and contacts RuvB.</text>
</comment>
<comment type="similarity">
    <text evidence="1">Belongs to the RuvA family.</text>
</comment>
<keyword id="KW-0963">Cytoplasm</keyword>
<keyword id="KW-0227">DNA damage</keyword>
<keyword id="KW-0233">DNA recombination</keyword>
<keyword id="KW-0234">DNA repair</keyword>
<keyword id="KW-0238">DNA-binding</keyword>
<keyword id="KW-1185">Reference proteome</keyword>
<dbReference type="EMBL" id="AE014133">
    <property type="protein sequence ID" value="AAN59683.1"/>
    <property type="molecule type" value="Genomic_DNA"/>
</dbReference>
<dbReference type="RefSeq" id="NP_722377.1">
    <property type="nucleotide sequence ID" value="NC_004350.2"/>
</dbReference>
<dbReference type="RefSeq" id="WP_002262395.1">
    <property type="nucleotide sequence ID" value="NC_004350.2"/>
</dbReference>
<dbReference type="SMR" id="Q8CWW3"/>
<dbReference type="STRING" id="210007.SMU_2088"/>
<dbReference type="KEGG" id="smu:SMU_2088"/>
<dbReference type="PATRIC" id="fig|210007.7.peg.1858"/>
<dbReference type="eggNOG" id="COG0632">
    <property type="taxonomic scope" value="Bacteria"/>
</dbReference>
<dbReference type="HOGENOM" id="CLU_087936_1_0_9"/>
<dbReference type="OrthoDB" id="5293449at2"/>
<dbReference type="PhylomeDB" id="Q8CWW3"/>
<dbReference type="Proteomes" id="UP000002512">
    <property type="component" value="Chromosome"/>
</dbReference>
<dbReference type="GO" id="GO:0005737">
    <property type="term" value="C:cytoplasm"/>
    <property type="evidence" value="ECO:0007669"/>
    <property type="project" value="UniProtKB-SubCell"/>
</dbReference>
<dbReference type="GO" id="GO:0009379">
    <property type="term" value="C:Holliday junction helicase complex"/>
    <property type="evidence" value="ECO:0007669"/>
    <property type="project" value="InterPro"/>
</dbReference>
<dbReference type="GO" id="GO:0048476">
    <property type="term" value="C:Holliday junction resolvase complex"/>
    <property type="evidence" value="ECO:0007669"/>
    <property type="project" value="UniProtKB-UniRule"/>
</dbReference>
<dbReference type="GO" id="GO:0005524">
    <property type="term" value="F:ATP binding"/>
    <property type="evidence" value="ECO:0007669"/>
    <property type="project" value="InterPro"/>
</dbReference>
<dbReference type="GO" id="GO:0000400">
    <property type="term" value="F:four-way junction DNA binding"/>
    <property type="evidence" value="ECO:0007669"/>
    <property type="project" value="UniProtKB-UniRule"/>
</dbReference>
<dbReference type="GO" id="GO:0009378">
    <property type="term" value="F:four-way junction helicase activity"/>
    <property type="evidence" value="ECO:0007669"/>
    <property type="project" value="InterPro"/>
</dbReference>
<dbReference type="GO" id="GO:0006310">
    <property type="term" value="P:DNA recombination"/>
    <property type="evidence" value="ECO:0007669"/>
    <property type="project" value="UniProtKB-UniRule"/>
</dbReference>
<dbReference type="GO" id="GO:0006281">
    <property type="term" value="P:DNA repair"/>
    <property type="evidence" value="ECO:0007669"/>
    <property type="project" value="UniProtKB-UniRule"/>
</dbReference>
<dbReference type="CDD" id="cd14332">
    <property type="entry name" value="UBA_RuvA_C"/>
    <property type="match status" value="1"/>
</dbReference>
<dbReference type="Gene3D" id="1.10.150.20">
    <property type="entry name" value="5' to 3' exonuclease, C-terminal subdomain"/>
    <property type="match status" value="1"/>
</dbReference>
<dbReference type="Gene3D" id="1.10.8.10">
    <property type="entry name" value="DNA helicase RuvA subunit, C-terminal domain"/>
    <property type="match status" value="1"/>
</dbReference>
<dbReference type="Gene3D" id="2.40.50.140">
    <property type="entry name" value="Nucleic acid-binding proteins"/>
    <property type="match status" value="1"/>
</dbReference>
<dbReference type="HAMAP" id="MF_00031">
    <property type="entry name" value="DNA_HJ_migration_RuvA"/>
    <property type="match status" value="1"/>
</dbReference>
<dbReference type="InterPro" id="IPR013849">
    <property type="entry name" value="DNA_helicase_Holl-junc_RuvA_I"/>
</dbReference>
<dbReference type="InterPro" id="IPR003583">
    <property type="entry name" value="Hlx-hairpin-Hlx_DNA-bd_motif"/>
</dbReference>
<dbReference type="InterPro" id="IPR012340">
    <property type="entry name" value="NA-bd_OB-fold"/>
</dbReference>
<dbReference type="InterPro" id="IPR000085">
    <property type="entry name" value="RuvA"/>
</dbReference>
<dbReference type="InterPro" id="IPR010994">
    <property type="entry name" value="RuvA_2-like"/>
</dbReference>
<dbReference type="InterPro" id="IPR011114">
    <property type="entry name" value="RuvA_C"/>
</dbReference>
<dbReference type="InterPro" id="IPR036267">
    <property type="entry name" value="RuvA_C_sf"/>
</dbReference>
<dbReference type="NCBIfam" id="TIGR00084">
    <property type="entry name" value="ruvA"/>
    <property type="match status" value="1"/>
</dbReference>
<dbReference type="Pfam" id="PF14520">
    <property type="entry name" value="HHH_5"/>
    <property type="match status" value="1"/>
</dbReference>
<dbReference type="Pfam" id="PF07499">
    <property type="entry name" value="RuvA_C"/>
    <property type="match status" value="1"/>
</dbReference>
<dbReference type="Pfam" id="PF01330">
    <property type="entry name" value="RuvA_N"/>
    <property type="match status" value="1"/>
</dbReference>
<dbReference type="SMART" id="SM00278">
    <property type="entry name" value="HhH1"/>
    <property type="match status" value="2"/>
</dbReference>
<dbReference type="SUPFAM" id="SSF46929">
    <property type="entry name" value="DNA helicase RuvA subunit, C-terminal domain"/>
    <property type="match status" value="1"/>
</dbReference>
<dbReference type="SUPFAM" id="SSF50249">
    <property type="entry name" value="Nucleic acid-binding proteins"/>
    <property type="match status" value="1"/>
</dbReference>
<dbReference type="SUPFAM" id="SSF47781">
    <property type="entry name" value="RuvA domain 2-like"/>
    <property type="match status" value="1"/>
</dbReference>
<feature type="chain" id="PRO_0000094690" description="Holliday junction branch migration complex subunit RuvA">
    <location>
        <begin position="1"/>
        <end position="197"/>
    </location>
</feature>
<feature type="region of interest" description="Domain I" evidence="1">
    <location>
        <begin position="1"/>
        <end position="63"/>
    </location>
</feature>
<feature type="region of interest" description="Domain II" evidence="1">
    <location>
        <begin position="64"/>
        <end position="142"/>
    </location>
</feature>
<feature type="region of interest" description="Flexible linker" evidence="1">
    <location>
        <begin position="143"/>
        <end position="147"/>
    </location>
</feature>
<feature type="region of interest" description="Domain III" evidence="1">
    <location>
        <begin position="148"/>
        <end position="197"/>
    </location>
</feature>
<proteinExistence type="inferred from homology"/>
<evidence type="ECO:0000255" key="1">
    <source>
        <dbReference type="HAMAP-Rule" id="MF_00031"/>
    </source>
</evidence>
<organism>
    <name type="scientific">Streptococcus mutans serotype c (strain ATCC 700610 / UA159)</name>
    <dbReference type="NCBI Taxonomy" id="210007"/>
    <lineage>
        <taxon>Bacteria</taxon>
        <taxon>Bacillati</taxon>
        <taxon>Bacillota</taxon>
        <taxon>Bacilli</taxon>
        <taxon>Lactobacillales</taxon>
        <taxon>Streptococcaceae</taxon>
        <taxon>Streptococcus</taxon>
    </lineage>
</organism>